<keyword id="KW-0963">Cytoplasm</keyword>
<keyword id="KW-0489">Methyltransferase</keyword>
<keyword id="KW-0511">Multifunctional enzyme</keyword>
<keyword id="KW-0596">Phosphopantetheine</keyword>
<keyword id="KW-0597">Phosphoprotein</keyword>
<keyword id="KW-0808">Transferase</keyword>
<sequence>MNFHKGQPKEDLRVLFGPQCPDITDSITHIRDAISKDPTGLGFLTNILDELPSLWPTIAGAWPALKNVEGENQLLALGRLFEHESEVRVEASNLMMTPITVMRHVVDFWNLQDVATHPAFPSSSLSETEMPRIVDTQGFCVGLLAAIAVACSRNTQEFQYVASNAIRLSLCIGALVDLDEILCGSTTSLAVRWESVEDFNHLEKILNNNTEIPKGYTSCYTDVKSVTITIPNDSAERVKQEIHDHGLRTKQLSLRGRFHHEAHREGIQHIMKLCMNDSRFKLPRSDALLTPLRSSQGGEIFQQEALLHTVALDSILCAKANWYDVVSALINSTEMTVDQSRLLSIGPEEFVPRSARSRSVARRELESYGMQGFANESPQPSTASLSNSVQTFDSRPQAAEASPIAITGMACRYPNADTLAQLWELLELGRCTVKSPPESRFHMSDLQREPKGPFWGHFLERPDVFDHRFFNISAREAESMDPQQRVALQVAYEAMESAGYLGWQPNRLSQDIGCYVGVGSEDYTENVASRNANAFSITGTLQSFIAGRISHHFGWSGPSISLDTACSSAAVAIHLACKALQTNDCKIALAGGVNVLTNPRVYQNLSAASFLSPSGACKPFDASADGYCRGEGAGLFVLRPLQDAIDNGDPILGVIAGSAVNQGSNNSPITVPDAEAQRSLYNKAMSLAGVSPDEVTYVEAHGTGTQVGDPIELDSLRRTFGGPHRRNNLHIGSIKGNIGHTETSSGAAGLLKTILMLQQQRIPRQANFNQLNPKVKSLTPDRLVIASESTEWVSTKRVAMVSNYGASGSNAALIVKEHAPIGSEQNGTAPEYIQNKLAYNLAMKQNRDLPLNLTFSTSSDTTSLGARLEAISTGASADLIQKRPSNEPPVVLCFGGQNGLTATISKEVFDASALLRTHLEDCEEVGRTLGLLSLFPTIFSSAPITNIIHLHFILFSIQYASAKAWLDSGLRVSRIVGHSFGQLTALSVAGSLSVRDGIHLVTERARLIESSWGPESGIMLAVEGTEIEVQQLLDQTVESIEAIENAAARTPSASNLRLTRLQNSHAFHSRLVDSIVPGIMEVAGSLVYQTPIIPIEACSASGDWSTITAAEIVEHSRMPVYFRRAVERVAEKLQAPAVWLEAGSASPIIPMVRRVLESSSVANTYHKIDLGGSSGAQNLANVTSALWAQGVHVQFWPFDRAQHASFKWMNLPPYQFAQNSHWVDFDPAAFSSAGPSSGKQSAGQEAGLLCQLSESPDERLYHVNIQDALYRACTQGHAVLNQTLCPASMYMEMVLRAAASIFPTGNASEPAMSHIEDLTISSPLVLDPQGKVFLRLTRDGAGPTRPWLFSIFSSESNDHTLVHAEGTVCLHQERSRALARFQSMDRLLDSARSKTIEADPASNGLKGSTVYAALESVTNYGDYFRGVKQVFANGREASGLVSMMPSTTETNCNPILLDNFLQVAGIHVNCLSDRQSSEVFVCNAIGETFVINSLLKQENGASPSTWKVYTSYVRPSKTEIACDIYVMDCQTDTLSAAMMGVRFTSVSIRSLTRALAKLNNNVLETAEAQSVVEAAIPAEQSVVTATPSAPAADGHAANDLATVQEMLCELFGVSVAEVSPSVSLVDIGVDSLMSTEVLSEIKKRFQVDMSYTTLVDIPNIQGLVEHIFPGHSHAAPSRPVVEKAPVQSVAPQAVSHVPTPASNGPPLVSVARQCFDTTHAAVSHTSDAHWAGFFHTTYPKQMSLLTAYILEAFRALGSSLEASEPNEVLTPIAVLPRHEQLRKHLYKILDSVGLVRQMSTGELTLRQSGFEWVDWTNNETVESNALRVIVASPTGNSSAATMSPSKPIKMETVVWGERDNLQLRADIYYPETVDTTRKQRPIALMIHGGGHVMLSRKDIRPAQTQTLLDAGFLPVSIDYRLCPEVSLAEGPMADARDALSWVRRVLPNIPLLRADIRPDGNQVVAIGWSTGGHLAMTLPFTAPAAGIPAPDAVLAFYCPTNYEDPFWSNPNFPFGQTVASNEMEYDVWEGLQSMPIAGYNPALKERPLGGWMSTRDPRSRIALHMNWTGQTLPVLLKACTIKGNTEKCSPDDLSRPTEEDIQAVSPNYQIRVGRYNTPTFLIHGTSDDLVPCAQTESTHGALTASGVEAELRVVQEAAHLFDLYPASHAGQEAKAAVAEGYEFLRTHVQL</sequence>
<reference key="1">
    <citation type="journal article" date="2015" name="ChemBioChem">
        <title>Functional characterization of MpaG', the O-methyltransferase involved in the biosynthesis of mycophenolic acid.</title>
        <authorList>
            <person name="Zhang W."/>
            <person name="Cao S."/>
            <person name="Qiu L."/>
            <person name="Qi F."/>
            <person name="Li Z."/>
            <person name="Yang Y."/>
            <person name="Huang S."/>
            <person name="Bai F."/>
            <person name="Liu C."/>
            <person name="Wan X."/>
            <person name="Li S."/>
        </authorList>
    </citation>
    <scope>NUCLEOTIDE SEQUENCE [GENOMIC DNA]</scope>
    <source>
        <strain>NRRL864</strain>
    </source>
</reference>
<reference key="2">
    <citation type="journal article" date="2019" name="Proc. Natl. Acad. Sci. U.S.A.">
        <title>Compartmentalized biosynthesis of mycophenolic acid.</title>
        <authorList>
            <person name="Zhang W."/>
            <person name="Du L."/>
            <person name="Qu Z."/>
            <person name="Zhang X."/>
            <person name="Li F."/>
            <person name="Li Z."/>
            <person name="Qi F."/>
            <person name="Wang X."/>
            <person name="Jiang Y."/>
            <person name="Men P."/>
            <person name="Sun J."/>
            <person name="Cao S."/>
            <person name="Geng C."/>
            <person name="Qi F."/>
            <person name="Wan X."/>
            <person name="Liu C."/>
            <person name="Li S."/>
        </authorList>
    </citation>
    <scope>FUNCTION</scope>
    <scope>CATALYTIC ACTIVITY</scope>
    <scope>SUBCELLULAR LOCATION</scope>
    <scope>PATHWAY</scope>
</reference>
<proteinExistence type="evidence at protein level"/>
<gene>
    <name evidence="8" type="primary">mpaC'</name>
</gene>
<name>MPAC2_PENBR</name>
<accession>A0A0B5KU17</accession>
<comment type="function">
    <text evidence="7 10">Non-reducing polyketide synthase; part of the gene cluster that mediates the biosynthesis of mycophenolic acid (MPA), the first isolated antibiotic natural product in the world obtained from a culture of Penicillium brevicompactum in 1893 (PubMed:31209052). MpaC' catalyzes the synthesis of 5-methylorsellinic acid (5MOA) via the condensation of 1 acetyl-CoA starter unit with 3 malonyl-CoA units and one methylation step (PubMed:31209052). The first step of the pathway is the synthesis of 5-methylorsellinic acid (5MOA) by the cytosolic polyketide synthase mpaC. 5MOA is then converted to the phthalide compound 5,7-dihydroxy-4,6-dimethylphthalide (DHMP) by the endoplasmic reticulum-bound cytochrome P450 monooxygenase mpaDE. MpaDE first catalyzes hydroxylation of 5-MOA to 4,6-dihydroxy-2-(hydroxymethyl)-3-methylbenzoic acid (DHMB). MpaDE then acts as a lactone synthase that catalyzes the ring closure to convert DHMB into DHMP. The next step is the prenylation of DHMP by the Golgi apparatus-associated prenyltransferase mpaA to yield farnesyl-DHMP (FDHMP). The ER-bound oxygenase mpaB then mediates the oxidative cleavage the C19-C20 double bond in FDHMP to yield FDHMP-3C via a mycophenolic aldehyde intermediate. The O-methyltransferase mpaG catalyzes the methylation of FDHMP-3C to yield MFDHMP-3C. After the cytosolic methylation of FDHMP-3C, MFDHMP-3C enters into peroxisomes probably via free diffusion due to its low molecular weight. Upon a peroxisomal CoA ligation reaction, catalyzed by a beta-oxidation component enzyme acyl-CoA ligase ACL891, MFDHMP-3C-CoA would then be restricted to peroxisomes for the following beta-oxidation pathway steps. The peroxisomal beta-oxidation machinery than converts MFDHMP-3C-CoA into MPA_CoA, via a beta-oxidation chain-shortening process. Finally mpaH acts as a peroxisomal acyl-CoA hydrolase with high substrate specificity toward MPA-CoA to release the final product MPA (Probable) (PubMed:31209052).</text>
</comment>
<comment type="catalytic activity">
    <reaction evidence="7">
        <text>3 malonyl-CoA + acetyl-CoA + S-adenosyl-L-methionine + H(+) = 5-methylorsellinate + S-adenosyl-L-homocysteine + 3 CO2 + 4 CoA</text>
        <dbReference type="Rhea" id="RHEA:63056"/>
        <dbReference type="ChEBI" id="CHEBI:15378"/>
        <dbReference type="ChEBI" id="CHEBI:16526"/>
        <dbReference type="ChEBI" id="CHEBI:57287"/>
        <dbReference type="ChEBI" id="CHEBI:57288"/>
        <dbReference type="ChEBI" id="CHEBI:57384"/>
        <dbReference type="ChEBI" id="CHEBI:57856"/>
        <dbReference type="ChEBI" id="CHEBI:59789"/>
        <dbReference type="ChEBI" id="CHEBI:146172"/>
    </reaction>
    <physiologicalReaction direction="left-to-right" evidence="7">
        <dbReference type="Rhea" id="RHEA:63057"/>
    </physiologicalReaction>
</comment>
<comment type="pathway">
    <text evidence="7">Secondary metabolite biosynthesis; terpenoid biosynthesis.</text>
</comment>
<comment type="subcellular location">
    <subcellularLocation>
        <location evidence="7">Cytoplasm</location>
        <location evidence="7">Cytosol</location>
    </subcellularLocation>
</comment>
<comment type="domain">
    <text evidence="9">Multidomain protein; including a starter unit:ACP transacylase (SAT) that selects the starter unit; a ketosynthase (KS) that catalyzes repeated decarboxylative condensation to elongate the polyketide backbone; a malonyl-CoA:ACP transacylase (MAT) that selects and transfers the extender unit malonyl-CoA; a product template (PT) domain that controls the immediate cyclization regioselectivity of the reactive polyketide backbone; and an acyl-carrier protein (ACP) that serves as the tether of the growing and completed polyketide via its phosphopantetheinyl arm.</text>
</comment>
<feature type="chain" id="PRO_0000451891" description="Non-reducing polyketide synthase mapC'">
    <location>
        <begin position="1"/>
        <end position="2190"/>
    </location>
</feature>
<feature type="domain" description="Ketosynthase family 3 (KS3)" evidence="4">
    <location>
        <begin position="401"/>
        <end position="817"/>
    </location>
</feature>
<feature type="domain" description="PKS/mFAS DH" evidence="5">
    <location>
        <begin position="1243"/>
        <end position="1552"/>
    </location>
</feature>
<feature type="domain" description="Carrier" evidence="3">
    <location>
        <begin position="1597"/>
        <end position="1671"/>
    </location>
</feature>
<feature type="region of interest" description="N-terminal acylcarrier protein transacylase domain (SAT)" evidence="2">
    <location>
        <begin position="14"/>
        <end position="268"/>
    </location>
</feature>
<feature type="region of interest" description="Malonyl-CoA:ACP transacylase (MAT) domain" evidence="2">
    <location>
        <begin position="893"/>
        <end position="1190"/>
    </location>
</feature>
<feature type="region of interest" description="N-terminal hotdog fold" evidence="5">
    <location>
        <begin position="1243"/>
        <end position="1375"/>
    </location>
</feature>
<feature type="region of interest" description="Product template (PT) domain" evidence="2">
    <location>
        <begin position="1251"/>
        <end position="1556"/>
    </location>
</feature>
<feature type="region of interest" description="C-terminal hotdog fold" evidence="5">
    <location>
        <begin position="1401"/>
        <end position="1552"/>
    </location>
</feature>
<feature type="region of interest" description="Methyltransferase (CMeT) domain" evidence="2">
    <location>
        <begin position="1840"/>
        <end position="2187"/>
    </location>
</feature>
<feature type="active site" description="For beta-ketoacyl synthase activity" evidence="4">
    <location>
        <position position="566"/>
    </location>
</feature>
<feature type="active site" description="For beta-ketoacyl synthase activity" evidence="4">
    <location>
        <position position="701"/>
    </location>
</feature>
<feature type="active site" description="For beta-ketoacyl synthase activity" evidence="4">
    <location>
        <position position="740"/>
    </location>
</feature>
<feature type="active site" description="For acyl/malonyl transferase activity" evidence="6">
    <location>
        <position position="979"/>
    </location>
</feature>
<feature type="active site" description="Proton acceptor; for dehydratase activity" evidence="5">
    <location>
        <position position="1277"/>
    </location>
</feature>
<feature type="active site" description="Proton donor; for dehydratase activity" evidence="5">
    <location>
        <position position="1458"/>
    </location>
</feature>
<feature type="active site" description="For thioesterase activity" evidence="1">
    <location>
        <position position="1969"/>
    </location>
</feature>
<feature type="active site" description="For thioesterase activity" evidence="1">
    <location>
        <position position="2127"/>
    </location>
</feature>
<feature type="active site" description="For thioesterase activity" evidence="1">
    <location>
        <position position="2159"/>
    </location>
</feature>
<feature type="modified residue" description="O-(pantetheine 4'-phosphoryl)serine" evidence="3">
    <location>
        <position position="1631"/>
    </location>
</feature>
<dbReference type="EC" id="2.3.1.-" evidence="7"/>
<dbReference type="EMBL" id="KM595305">
    <property type="protein sequence ID" value="AJG44381.1"/>
    <property type="molecule type" value="Genomic_DNA"/>
</dbReference>
<dbReference type="SMR" id="A0A0B5KU17"/>
<dbReference type="ESTHER" id="penbr-mpac">
    <property type="family name" value="BD-FAE"/>
</dbReference>
<dbReference type="UniPathway" id="UPA00213"/>
<dbReference type="GO" id="GO:0005829">
    <property type="term" value="C:cytosol"/>
    <property type="evidence" value="ECO:0000314"/>
    <property type="project" value="GO_Central"/>
</dbReference>
<dbReference type="GO" id="GO:0004315">
    <property type="term" value="F:3-oxoacyl-[acyl-carrier-protein] synthase activity"/>
    <property type="evidence" value="ECO:0007669"/>
    <property type="project" value="InterPro"/>
</dbReference>
<dbReference type="GO" id="GO:0004312">
    <property type="term" value="F:fatty acid synthase activity"/>
    <property type="evidence" value="ECO:0007669"/>
    <property type="project" value="TreeGrafter"/>
</dbReference>
<dbReference type="GO" id="GO:0008168">
    <property type="term" value="F:methyltransferase activity"/>
    <property type="evidence" value="ECO:0007669"/>
    <property type="project" value="UniProtKB-KW"/>
</dbReference>
<dbReference type="GO" id="GO:0031177">
    <property type="term" value="F:phosphopantetheine binding"/>
    <property type="evidence" value="ECO:0007669"/>
    <property type="project" value="InterPro"/>
</dbReference>
<dbReference type="GO" id="GO:0016218">
    <property type="term" value="F:polyketide synthase activity"/>
    <property type="evidence" value="ECO:0000314"/>
    <property type="project" value="UniProt"/>
</dbReference>
<dbReference type="GO" id="GO:0008236">
    <property type="term" value="F:serine-type peptidase activity"/>
    <property type="evidence" value="ECO:0007669"/>
    <property type="project" value="InterPro"/>
</dbReference>
<dbReference type="GO" id="GO:0006633">
    <property type="term" value="P:fatty acid biosynthetic process"/>
    <property type="evidence" value="ECO:0007669"/>
    <property type="project" value="InterPro"/>
</dbReference>
<dbReference type="GO" id="GO:0032259">
    <property type="term" value="P:methylation"/>
    <property type="evidence" value="ECO:0007669"/>
    <property type="project" value="UniProtKB-KW"/>
</dbReference>
<dbReference type="GO" id="GO:0140722">
    <property type="term" value="P:mycophenolic acid biosynthetic process"/>
    <property type="evidence" value="ECO:0000314"/>
    <property type="project" value="GO_Central"/>
</dbReference>
<dbReference type="GO" id="GO:0006508">
    <property type="term" value="P:proteolysis"/>
    <property type="evidence" value="ECO:0007669"/>
    <property type="project" value="InterPro"/>
</dbReference>
<dbReference type="GO" id="GO:0016114">
    <property type="term" value="P:terpenoid biosynthetic process"/>
    <property type="evidence" value="ECO:0007669"/>
    <property type="project" value="UniProtKB-UniPathway"/>
</dbReference>
<dbReference type="CDD" id="cd00833">
    <property type="entry name" value="PKS"/>
    <property type="match status" value="1"/>
</dbReference>
<dbReference type="Gene3D" id="3.30.70.3290">
    <property type="match status" value="1"/>
</dbReference>
<dbReference type="Gene3D" id="3.40.47.10">
    <property type="match status" value="1"/>
</dbReference>
<dbReference type="Gene3D" id="1.10.1200.10">
    <property type="entry name" value="ACP-like"/>
    <property type="match status" value="1"/>
</dbReference>
<dbReference type="Gene3D" id="3.40.50.1820">
    <property type="entry name" value="alpha/beta hydrolase"/>
    <property type="match status" value="1"/>
</dbReference>
<dbReference type="Gene3D" id="3.40.366.10">
    <property type="entry name" value="Malonyl-Coenzyme A Acyl Carrier Protein, domain 2"/>
    <property type="match status" value="2"/>
</dbReference>
<dbReference type="Gene3D" id="3.10.129.110">
    <property type="entry name" value="Polyketide synthase dehydratase"/>
    <property type="match status" value="1"/>
</dbReference>
<dbReference type="InterPro" id="IPR029058">
    <property type="entry name" value="AB_hydrolase_fold"/>
</dbReference>
<dbReference type="InterPro" id="IPR001227">
    <property type="entry name" value="Ac_transferase_dom_sf"/>
</dbReference>
<dbReference type="InterPro" id="IPR036736">
    <property type="entry name" value="ACP-like_sf"/>
</dbReference>
<dbReference type="InterPro" id="IPR014043">
    <property type="entry name" value="Acyl_transferase_dom"/>
</dbReference>
<dbReference type="InterPro" id="IPR016035">
    <property type="entry name" value="Acyl_Trfase/lysoPLipase"/>
</dbReference>
<dbReference type="InterPro" id="IPR049492">
    <property type="entry name" value="BD-FAE-like_dom"/>
</dbReference>
<dbReference type="InterPro" id="IPR018201">
    <property type="entry name" value="Ketoacyl_synth_AS"/>
</dbReference>
<dbReference type="InterPro" id="IPR014031">
    <property type="entry name" value="Ketoacyl_synth_C"/>
</dbReference>
<dbReference type="InterPro" id="IPR014030">
    <property type="entry name" value="Ketoacyl_synth_N"/>
</dbReference>
<dbReference type="InterPro" id="IPR001375">
    <property type="entry name" value="Peptidase_S9_cat"/>
</dbReference>
<dbReference type="InterPro" id="IPR020841">
    <property type="entry name" value="PKS_Beta-ketoAc_synthase_dom"/>
</dbReference>
<dbReference type="InterPro" id="IPR042104">
    <property type="entry name" value="PKS_dehydratase_sf"/>
</dbReference>
<dbReference type="InterPro" id="IPR020807">
    <property type="entry name" value="PKS_DH"/>
</dbReference>
<dbReference type="InterPro" id="IPR049551">
    <property type="entry name" value="PKS_DH_C"/>
</dbReference>
<dbReference type="InterPro" id="IPR049552">
    <property type="entry name" value="PKS_DH_N"/>
</dbReference>
<dbReference type="InterPro" id="IPR049900">
    <property type="entry name" value="PKS_mFAS_DH"/>
</dbReference>
<dbReference type="InterPro" id="IPR050091">
    <property type="entry name" value="PKS_NRPS_Biosynth_Enz"/>
</dbReference>
<dbReference type="InterPro" id="IPR020806">
    <property type="entry name" value="PKS_PP-bd"/>
</dbReference>
<dbReference type="InterPro" id="IPR009081">
    <property type="entry name" value="PP-bd_ACP"/>
</dbReference>
<dbReference type="InterPro" id="IPR006162">
    <property type="entry name" value="Ppantetheine_attach_site"/>
</dbReference>
<dbReference type="InterPro" id="IPR032088">
    <property type="entry name" value="SAT"/>
</dbReference>
<dbReference type="InterPro" id="IPR016039">
    <property type="entry name" value="Thiolase-like"/>
</dbReference>
<dbReference type="PANTHER" id="PTHR43775">
    <property type="entry name" value="FATTY ACID SYNTHASE"/>
    <property type="match status" value="1"/>
</dbReference>
<dbReference type="PANTHER" id="PTHR43775:SF21">
    <property type="entry name" value="NON-REDUCING POLYKETIDE SYNTHASE AUSA-RELATED"/>
    <property type="match status" value="1"/>
</dbReference>
<dbReference type="Pfam" id="PF00698">
    <property type="entry name" value="Acyl_transf_1"/>
    <property type="match status" value="1"/>
</dbReference>
<dbReference type="Pfam" id="PF20434">
    <property type="entry name" value="BD-FAE"/>
    <property type="match status" value="1"/>
</dbReference>
<dbReference type="Pfam" id="PF18558">
    <property type="entry name" value="HTH_51"/>
    <property type="match status" value="1"/>
</dbReference>
<dbReference type="Pfam" id="PF00109">
    <property type="entry name" value="ketoacyl-synt"/>
    <property type="match status" value="1"/>
</dbReference>
<dbReference type="Pfam" id="PF02801">
    <property type="entry name" value="Ketoacyl-synt_C"/>
    <property type="match status" value="1"/>
</dbReference>
<dbReference type="Pfam" id="PF00326">
    <property type="entry name" value="Peptidase_S9"/>
    <property type="match status" value="1"/>
</dbReference>
<dbReference type="Pfam" id="PF21089">
    <property type="entry name" value="PKS_DH_N"/>
    <property type="match status" value="1"/>
</dbReference>
<dbReference type="Pfam" id="PF00550">
    <property type="entry name" value="PP-binding"/>
    <property type="match status" value="1"/>
</dbReference>
<dbReference type="Pfam" id="PF14765">
    <property type="entry name" value="PS-DH"/>
    <property type="match status" value="1"/>
</dbReference>
<dbReference type="Pfam" id="PF16073">
    <property type="entry name" value="SAT"/>
    <property type="match status" value="1"/>
</dbReference>
<dbReference type="SMART" id="SM00827">
    <property type="entry name" value="PKS_AT"/>
    <property type="match status" value="1"/>
</dbReference>
<dbReference type="SMART" id="SM00826">
    <property type="entry name" value="PKS_DH"/>
    <property type="match status" value="1"/>
</dbReference>
<dbReference type="SMART" id="SM00825">
    <property type="entry name" value="PKS_KS"/>
    <property type="match status" value="1"/>
</dbReference>
<dbReference type="SMART" id="SM00823">
    <property type="entry name" value="PKS_PP"/>
    <property type="match status" value="1"/>
</dbReference>
<dbReference type="SMART" id="SM01294">
    <property type="entry name" value="PKS_PP_betabranch"/>
    <property type="match status" value="1"/>
</dbReference>
<dbReference type="SUPFAM" id="SSF47336">
    <property type="entry name" value="ACP-like"/>
    <property type="match status" value="1"/>
</dbReference>
<dbReference type="SUPFAM" id="SSF53474">
    <property type="entry name" value="alpha/beta-Hydrolases"/>
    <property type="match status" value="1"/>
</dbReference>
<dbReference type="SUPFAM" id="SSF52151">
    <property type="entry name" value="FabD/lysophospholipase-like"/>
    <property type="match status" value="1"/>
</dbReference>
<dbReference type="SUPFAM" id="SSF53901">
    <property type="entry name" value="Thiolase-like"/>
    <property type="match status" value="1"/>
</dbReference>
<dbReference type="PROSITE" id="PS50075">
    <property type="entry name" value="CARRIER"/>
    <property type="match status" value="1"/>
</dbReference>
<dbReference type="PROSITE" id="PS00606">
    <property type="entry name" value="KS3_1"/>
    <property type="match status" value="1"/>
</dbReference>
<dbReference type="PROSITE" id="PS52004">
    <property type="entry name" value="KS3_2"/>
    <property type="match status" value="1"/>
</dbReference>
<dbReference type="PROSITE" id="PS00012">
    <property type="entry name" value="PHOSPHOPANTETHEINE"/>
    <property type="match status" value="1"/>
</dbReference>
<dbReference type="PROSITE" id="PS52019">
    <property type="entry name" value="PKS_MFAS_DH"/>
    <property type="match status" value="1"/>
</dbReference>
<evidence type="ECO:0000250" key="1">
    <source>
        <dbReference type="UniProtKB" id="Q5ATJ7"/>
    </source>
</evidence>
<evidence type="ECO:0000255" key="2"/>
<evidence type="ECO:0000255" key="3">
    <source>
        <dbReference type="PROSITE-ProRule" id="PRU00258"/>
    </source>
</evidence>
<evidence type="ECO:0000255" key="4">
    <source>
        <dbReference type="PROSITE-ProRule" id="PRU01348"/>
    </source>
</evidence>
<evidence type="ECO:0000255" key="5">
    <source>
        <dbReference type="PROSITE-ProRule" id="PRU01363"/>
    </source>
</evidence>
<evidence type="ECO:0000255" key="6">
    <source>
        <dbReference type="PROSITE-ProRule" id="PRU10022"/>
    </source>
</evidence>
<evidence type="ECO:0000269" key="7">
    <source>
    </source>
</evidence>
<evidence type="ECO:0000303" key="8">
    <source>
    </source>
</evidence>
<evidence type="ECO:0000305" key="9"/>
<evidence type="ECO:0000305" key="10">
    <source>
    </source>
</evidence>
<organism>
    <name type="scientific">Penicillium brevicompactum</name>
    <dbReference type="NCBI Taxonomy" id="5074"/>
    <lineage>
        <taxon>Eukaryota</taxon>
        <taxon>Fungi</taxon>
        <taxon>Dikarya</taxon>
        <taxon>Ascomycota</taxon>
        <taxon>Pezizomycotina</taxon>
        <taxon>Eurotiomycetes</taxon>
        <taxon>Eurotiomycetidae</taxon>
        <taxon>Eurotiales</taxon>
        <taxon>Aspergillaceae</taxon>
        <taxon>Penicillium</taxon>
    </lineage>
</organism>
<protein>
    <recommendedName>
        <fullName evidence="8">Non-reducing polyketide synthase mapC'</fullName>
        <ecNumber evidence="7">2.3.1.-</ecNumber>
    </recommendedName>
    <alternativeName>
        <fullName evidence="8">Mycophenolic acid biosynthesis cluster protein C'</fullName>
    </alternativeName>
</protein>